<accession>Q4JUQ7</accession>
<comment type="function">
    <text evidence="1">Catalyzes the attachment of glutamate to tRNA(Glu) in a two-step reaction: glutamate is first activated by ATP to form Glu-AMP and then transferred to the acceptor end of tRNA(Glu).</text>
</comment>
<comment type="catalytic activity">
    <reaction evidence="1">
        <text>tRNA(Glu) + L-glutamate + ATP = L-glutamyl-tRNA(Glu) + AMP + diphosphate</text>
        <dbReference type="Rhea" id="RHEA:23540"/>
        <dbReference type="Rhea" id="RHEA-COMP:9663"/>
        <dbReference type="Rhea" id="RHEA-COMP:9680"/>
        <dbReference type="ChEBI" id="CHEBI:29985"/>
        <dbReference type="ChEBI" id="CHEBI:30616"/>
        <dbReference type="ChEBI" id="CHEBI:33019"/>
        <dbReference type="ChEBI" id="CHEBI:78442"/>
        <dbReference type="ChEBI" id="CHEBI:78520"/>
        <dbReference type="ChEBI" id="CHEBI:456215"/>
        <dbReference type="EC" id="6.1.1.17"/>
    </reaction>
</comment>
<comment type="subunit">
    <text evidence="1">Monomer.</text>
</comment>
<comment type="subcellular location">
    <subcellularLocation>
        <location evidence="1">Cytoplasm</location>
    </subcellularLocation>
</comment>
<comment type="similarity">
    <text evidence="1">Belongs to the class-I aminoacyl-tRNA synthetase family. Glutamate--tRNA ligase type 1 subfamily.</text>
</comment>
<reference key="1">
    <citation type="journal article" date="2005" name="J. Bacteriol.">
        <title>Complete genome sequence and analysis of the multiresistant nosocomial pathogen Corynebacterium jeikeium K411, a lipid-requiring bacterium of the human skin flora.</title>
        <authorList>
            <person name="Tauch A."/>
            <person name="Kaiser O."/>
            <person name="Hain T."/>
            <person name="Goesmann A."/>
            <person name="Weisshaar B."/>
            <person name="Albersmeier A."/>
            <person name="Bekel T."/>
            <person name="Bischoff N."/>
            <person name="Brune I."/>
            <person name="Chakraborty T."/>
            <person name="Kalinowski J."/>
            <person name="Meyer F."/>
            <person name="Rupp O."/>
            <person name="Schneiker S."/>
            <person name="Viehoever P."/>
            <person name="Puehler A."/>
        </authorList>
    </citation>
    <scope>NUCLEOTIDE SEQUENCE [LARGE SCALE GENOMIC DNA]</scope>
    <source>
        <strain>K411</strain>
    </source>
</reference>
<dbReference type="EC" id="6.1.1.17" evidence="1"/>
<dbReference type="EMBL" id="CR931997">
    <property type="protein sequence ID" value="CAI37450.1"/>
    <property type="molecule type" value="Genomic_DNA"/>
</dbReference>
<dbReference type="RefSeq" id="WP_011273776.1">
    <property type="nucleotide sequence ID" value="NC_007164.1"/>
</dbReference>
<dbReference type="SMR" id="Q4JUQ7"/>
<dbReference type="STRING" id="306537.jk1281"/>
<dbReference type="KEGG" id="cjk:jk1281"/>
<dbReference type="PATRIC" id="fig|306537.10.peg.1297"/>
<dbReference type="eggNOG" id="COG0008">
    <property type="taxonomic scope" value="Bacteria"/>
</dbReference>
<dbReference type="HOGENOM" id="CLU_015768_6_1_11"/>
<dbReference type="OrthoDB" id="9807503at2"/>
<dbReference type="Proteomes" id="UP000000545">
    <property type="component" value="Chromosome"/>
</dbReference>
<dbReference type="GO" id="GO:0005829">
    <property type="term" value="C:cytosol"/>
    <property type="evidence" value="ECO:0007669"/>
    <property type="project" value="TreeGrafter"/>
</dbReference>
<dbReference type="GO" id="GO:0005524">
    <property type="term" value="F:ATP binding"/>
    <property type="evidence" value="ECO:0007669"/>
    <property type="project" value="UniProtKB-UniRule"/>
</dbReference>
<dbReference type="GO" id="GO:0004818">
    <property type="term" value="F:glutamate-tRNA ligase activity"/>
    <property type="evidence" value="ECO:0007669"/>
    <property type="project" value="UniProtKB-UniRule"/>
</dbReference>
<dbReference type="GO" id="GO:0000049">
    <property type="term" value="F:tRNA binding"/>
    <property type="evidence" value="ECO:0007669"/>
    <property type="project" value="InterPro"/>
</dbReference>
<dbReference type="GO" id="GO:0008270">
    <property type="term" value="F:zinc ion binding"/>
    <property type="evidence" value="ECO:0007669"/>
    <property type="project" value="InterPro"/>
</dbReference>
<dbReference type="GO" id="GO:0006424">
    <property type="term" value="P:glutamyl-tRNA aminoacylation"/>
    <property type="evidence" value="ECO:0007669"/>
    <property type="project" value="UniProtKB-UniRule"/>
</dbReference>
<dbReference type="CDD" id="cd00808">
    <property type="entry name" value="GluRS_core"/>
    <property type="match status" value="1"/>
</dbReference>
<dbReference type="FunFam" id="3.40.50.620:FF:000149">
    <property type="entry name" value="Glutamate--tRNA ligase"/>
    <property type="match status" value="1"/>
</dbReference>
<dbReference type="Gene3D" id="1.10.10.350">
    <property type="match status" value="1"/>
</dbReference>
<dbReference type="Gene3D" id="1.10.8.70">
    <property type="entry name" value="Glutamate-tRNA synthetase, class I, anticodon-binding domain 1"/>
    <property type="match status" value="1"/>
</dbReference>
<dbReference type="Gene3D" id="3.40.50.620">
    <property type="entry name" value="HUPs"/>
    <property type="match status" value="1"/>
</dbReference>
<dbReference type="HAMAP" id="MF_00022">
    <property type="entry name" value="Glu_tRNA_synth_type1"/>
    <property type="match status" value="1"/>
</dbReference>
<dbReference type="InterPro" id="IPR045462">
    <property type="entry name" value="aa-tRNA-synth_I_cd-bd"/>
</dbReference>
<dbReference type="InterPro" id="IPR020751">
    <property type="entry name" value="aa-tRNA-synth_I_codon-bd_sub2"/>
</dbReference>
<dbReference type="InterPro" id="IPR008925">
    <property type="entry name" value="aa_tRNA-synth_I_cd-bd_sf"/>
</dbReference>
<dbReference type="InterPro" id="IPR004527">
    <property type="entry name" value="Glu-tRNA-ligase_bac/mito"/>
</dbReference>
<dbReference type="InterPro" id="IPR020752">
    <property type="entry name" value="Glu-tRNA-synth_I_codon-bd_sub1"/>
</dbReference>
<dbReference type="InterPro" id="IPR000924">
    <property type="entry name" value="Glu/Gln-tRNA-synth"/>
</dbReference>
<dbReference type="InterPro" id="IPR020058">
    <property type="entry name" value="Glu/Gln-tRNA-synth_Ib_cat-dom"/>
</dbReference>
<dbReference type="InterPro" id="IPR049940">
    <property type="entry name" value="GluQ/Sye"/>
</dbReference>
<dbReference type="InterPro" id="IPR033910">
    <property type="entry name" value="GluRS_core"/>
</dbReference>
<dbReference type="InterPro" id="IPR014729">
    <property type="entry name" value="Rossmann-like_a/b/a_fold"/>
</dbReference>
<dbReference type="NCBIfam" id="TIGR00464">
    <property type="entry name" value="gltX_bact"/>
    <property type="match status" value="1"/>
</dbReference>
<dbReference type="PANTHER" id="PTHR43311">
    <property type="entry name" value="GLUTAMATE--TRNA LIGASE"/>
    <property type="match status" value="1"/>
</dbReference>
<dbReference type="PANTHER" id="PTHR43311:SF2">
    <property type="entry name" value="GLUTAMATE--TRNA LIGASE, MITOCHONDRIAL-RELATED"/>
    <property type="match status" value="1"/>
</dbReference>
<dbReference type="Pfam" id="PF19269">
    <property type="entry name" value="Anticodon_2"/>
    <property type="match status" value="1"/>
</dbReference>
<dbReference type="Pfam" id="PF00749">
    <property type="entry name" value="tRNA-synt_1c"/>
    <property type="match status" value="1"/>
</dbReference>
<dbReference type="PRINTS" id="PR00987">
    <property type="entry name" value="TRNASYNTHGLU"/>
</dbReference>
<dbReference type="SUPFAM" id="SSF48163">
    <property type="entry name" value="An anticodon-binding domain of class I aminoacyl-tRNA synthetases"/>
    <property type="match status" value="1"/>
</dbReference>
<dbReference type="SUPFAM" id="SSF52374">
    <property type="entry name" value="Nucleotidylyl transferase"/>
    <property type="match status" value="1"/>
</dbReference>
<protein>
    <recommendedName>
        <fullName evidence="1">Glutamate--tRNA ligase</fullName>
        <ecNumber evidence="1">6.1.1.17</ecNumber>
    </recommendedName>
    <alternativeName>
        <fullName evidence="1">Glutamyl-tRNA synthetase</fullName>
        <shortName evidence="1">GluRS</shortName>
    </alternativeName>
</protein>
<sequence length="500" mass="56360">MSEVSEVRVRFCPSPTGTPHVGMVRTALFNWAYARHTGGKLVFRIEDTDAKRDSEESYQAIIDSLKWLNLGWDEGIEVGGPHEPYRQSQRMDIYADVLEKLKESGDVYPAYSTNEEVQARHKAAGRDPQLGYDNYDRDLTEEQIAQFKAEGREPVWRLRMPDNRIYEWHDLVRGDMSVDGKTVPDFVVARSNGQPLYTLVNPVDDALMEITHVLRGEDLLPSTPRQIALYEALVRVGVAKQVPTFGHLPFVMGEGNKKLSKRDPESNLFNHRDNGIIPEGMLNYLSLLGWSLSADEDIFTMQQLIDNFDVADVKPNPARFDQKKLEAINADHIRMLELGDFTERLRAYLEEYKGFPADYPADKFAFAAELVQTRIKTLSDADGLLRFLITSDADLSLDEKAARKNLKEDAVEVLEVAIAQLEAIADGEFKTDVIEKALQSKLIEEMELKPRKAYGALRVAISGAAVSPPLFESMELLGKESTLARLRAAREQTPFAPAQQ</sequence>
<name>SYE_CORJK</name>
<gene>
    <name evidence="1" type="primary">gltX</name>
    <name type="ordered locus">jk1281</name>
</gene>
<organism>
    <name type="scientific">Corynebacterium jeikeium (strain K411)</name>
    <dbReference type="NCBI Taxonomy" id="306537"/>
    <lineage>
        <taxon>Bacteria</taxon>
        <taxon>Bacillati</taxon>
        <taxon>Actinomycetota</taxon>
        <taxon>Actinomycetes</taxon>
        <taxon>Mycobacteriales</taxon>
        <taxon>Corynebacteriaceae</taxon>
        <taxon>Corynebacterium</taxon>
    </lineage>
</organism>
<feature type="chain" id="PRO_0000237355" description="Glutamate--tRNA ligase">
    <location>
        <begin position="1"/>
        <end position="500"/>
    </location>
</feature>
<feature type="short sequence motif" description="'HIGH' region" evidence="1">
    <location>
        <begin position="13"/>
        <end position="23"/>
    </location>
</feature>
<feature type="short sequence motif" description="'KMSKS' region" evidence="1">
    <location>
        <begin position="258"/>
        <end position="262"/>
    </location>
</feature>
<feature type="binding site" evidence="1">
    <location>
        <position position="261"/>
    </location>
    <ligand>
        <name>ATP</name>
        <dbReference type="ChEBI" id="CHEBI:30616"/>
    </ligand>
</feature>
<evidence type="ECO:0000255" key="1">
    <source>
        <dbReference type="HAMAP-Rule" id="MF_00022"/>
    </source>
</evidence>
<keyword id="KW-0030">Aminoacyl-tRNA synthetase</keyword>
<keyword id="KW-0067">ATP-binding</keyword>
<keyword id="KW-0963">Cytoplasm</keyword>
<keyword id="KW-0436">Ligase</keyword>
<keyword id="KW-0547">Nucleotide-binding</keyword>
<keyword id="KW-0648">Protein biosynthesis</keyword>
<keyword id="KW-1185">Reference proteome</keyword>
<proteinExistence type="inferred from homology"/>